<accession>B8F768</accession>
<protein>
    <recommendedName>
        <fullName evidence="1">ATP synthase subunit a</fullName>
    </recommendedName>
    <alternativeName>
        <fullName evidence="1">ATP synthase F0 sector subunit a</fullName>
    </alternativeName>
    <alternativeName>
        <fullName evidence="1">F-ATPase subunit 6</fullName>
    </alternativeName>
</protein>
<feature type="chain" id="PRO_1000184284" description="ATP synthase subunit a">
    <location>
        <begin position="1"/>
        <end position="263"/>
    </location>
</feature>
<feature type="transmembrane region" description="Helical" evidence="1">
    <location>
        <begin position="26"/>
        <end position="46"/>
    </location>
</feature>
<feature type="transmembrane region" description="Helical" evidence="1">
    <location>
        <begin position="86"/>
        <end position="106"/>
    </location>
</feature>
<feature type="transmembrane region" description="Helical" evidence="1">
    <location>
        <begin position="130"/>
        <end position="150"/>
    </location>
</feature>
<feature type="transmembrane region" description="Helical" evidence="1">
    <location>
        <begin position="166"/>
        <end position="186"/>
    </location>
</feature>
<feature type="transmembrane region" description="Helical" evidence="1">
    <location>
        <begin position="195"/>
        <end position="215"/>
    </location>
</feature>
<feature type="transmembrane region" description="Helical" evidence="1">
    <location>
        <begin position="229"/>
        <end position="249"/>
    </location>
</feature>
<evidence type="ECO:0000255" key="1">
    <source>
        <dbReference type="HAMAP-Rule" id="MF_01393"/>
    </source>
</evidence>
<proteinExistence type="inferred from homology"/>
<sequence>MAGQTTADYIGHHLSFLKTGDGFWNVHLDTLFFSLVAGATFLFFFSRVAKNATDGVPGKFQCFVEMIVEWVDGLVKDNFHGSREVVAPLALTVFCWVFVMNAIDLIPVDYPPQFAALLGIDYLRAVPTADISATLGMAICVFCLIIFYTIKSKGFSGFVKEYTLHPFNHWAFIPVNFVLEIVTLLAKPISLAFRLFGNMYAGELIFILIAVMYMADNFLLQALGLPLHLAWAIFHILVITLQAFIFMMLTIVYLSIAYNKADH</sequence>
<comment type="function">
    <text evidence="1">Key component of the proton channel; it plays a direct role in the translocation of protons across the membrane.</text>
</comment>
<comment type="subunit">
    <text evidence="1">F-type ATPases have 2 components, CF(1) - the catalytic core - and CF(0) - the membrane proton channel. CF(1) has five subunits: alpha(3), beta(3), gamma(1), delta(1), epsilon(1). CF(0) has three main subunits: a(1), b(2) and c(9-12). The alpha and beta chains form an alternating ring which encloses part of the gamma chain. CF(1) is attached to CF(0) by a central stalk formed by the gamma and epsilon chains, while a peripheral stalk is formed by the delta and b chains.</text>
</comment>
<comment type="subcellular location">
    <subcellularLocation>
        <location evidence="1">Cell inner membrane</location>
        <topology evidence="1">Multi-pass membrane protein</topology>
    </subcellularLocation>
</comment>
<comment type="similarity">
    <text evidence="1">Belongs to the ATPase A chain family.</text>
</comment>
<dbReference type="EMBL" id="CP001321">
    <property type="protein sequence ID" value="ACL33170.1"/>
    <property type="molecule type" value="Genomic_DNA"/>
</dbReference>
<dbReference type="RefSeq" id="WP_005713638.1">
    <property type="nucleotide sequence ID" value="NC_011852.1"/>
</dbReference>
<dbReference type="SMR" id="B8F768"/>
<dbReference type="STRING" id="557723.HAPS_1620"/>
<dbReference type="KEGG" id="hap:HAPS_1620"/>
<dbReference type="HOGENOM" id="CLU_041018_1_0_6"/>
<dbReference type="Proteomes" id="UP000006743">
    <property type="component" value="Chromosome"/>
</dbReference>
<dbReference type="GO" id="GO:0005886">
    <property type="term" value="C:plasma membrane"/>
    <property type="evidence" value="ECO:0007669"/>
    <property type="project" value="UniProtKB-SubCell"/>
</dbReference>
<dbReference type="GO" id="GO:0045259">
    <property type="term" value="C:proton-transporting ATP synthase complex"/>
    <property type="evidence" value="ECO:0007669"/>
    <property type="project" value="UniProtKB-KW"/>
</dbReference>
<dbReference type="GO" id="GO:0046933">
    <property type="term" value="F:proton-transporting ATP synthase activity, rotational mechanism"/>
    <property type="evidence" value="ECO:0007669"/>
    <property type="project" value="UniProtKB-UniRule"/>
</dbReference>
<dbReference type="GO" id="GO:0042777">
    <property type="term" value="P:proton motive force-driven plasma membrane ATP synthesis"/>
    <property type="evidence" value="ECO:0007669"/>
    <property type="project" value="TreeGrafter"/>
</dbReference>
<dbReference type="CDD" id="cd00310">
    <property type="entry name" value="ATP-synt_Fo_a_6"/>
    <property type="match status" value="1"/>
</dbReference>
<dbReference type="FunFam" id="1.20.120.220:FF:000002">
    <property type="entry name" value="ATP synthase subunit a"/>
    <property type="match status" value="1"/>
</dbReference>
<dbReference type="Gene3D" id="1.20.120.220">
    <property type="entry name" value="ATP synthase, F0 complex, subunit A"/>
    <property type="match status" value="1"/>
</dbReference>
<dbReference type="HAMAP" id="MF_01393">
    <property type="entry name" value="ATP_synth_a_bact"/>
    <property type="match status" value="1"/>
</dbReference>
<dbReference type="InterPro" id="IPR045082">
    <property type="entry name" value="ATP_syn_F0_a_bact/chloroplast"/>
</dbReference>
<dbReference type="InterPro" id="IPR000568">
    <property type="entry name" value="ATP_synth_F0_asu"/>
</dbReference>
<dbReference type="InterPro" id="IPR023011">
    <property type="entry name" value="ATP_synth_F0_asu_AS"/>
</dbReference>
<dbReference type="InterPro" id="IPR035908">
    <property type="entry name" value="F0_ATP_A_sf"/>
</dbReference>
<dbReference type="NCBIfam" id="TIGR01131">
    <property type="entry name" value="ATP_synt_6_or_A"/>
    <property type="match status" value="1"/>
</dbReference>
<dbReference type="NCBIfam" id="NF004477">
    <property type="entry name" value="PRK05815.1-1"/>
    <property type="match status" value="1"/>
</dbReference>
<dbReference type="PANTHER" id="PTHR42823">
    <property type="entry name" value="ATP SYNTHASE SUBUNIT A, CHLOROPLASTIC"/>
    <property type="match status" value="1"/>
</dbReference>
<dbReference type="PANTHER" id="PTHR42823:SF3">
    <property type="entry name" value="ATP SYNTHASE SUBUNIT A, CHLOROPLASTIC"/>
    <property type="match status" value="1"/>
</dbReference>
<dbReference type="Pfam" id="PF00119">
    <property type="entry name" value="ATP-synt_A"/>
    <property type="match status" value="1"/>
</dbReference>
<dbReference type="PRINTS" id="PR00123">
    <property type="entry name" value="ATPASEA"/>
</dbReference>
<dbReference type="SUPFAM" id="SSF81336">
    <property type="entry name" value="F1F0 ATP synthase subunit A"/>
    <property type="match status" value="1"/>
</dbReference>
<dbReference type="PROSITE" id="PS00449">
    <property type="entry name" value="ATPASE_A"/>
    <property type="match status" value="1"/>
</dbReference>
<name>ATP6_GLAP5</name>
<keyword id="KW-0066">ATP synthesis</keyword>
<keyword id="KW-0997">Cell inner membrane</keyword>
<keyword id="KW-1003">Cell membrane</keyword>
<keyword id="KW-0138">CF(0)</keyword>
<keyword id="KW-0375">Hydrogen ion transport</keyword>
<keyword id="KW-0406">Ion transport</keyword>
<keyword id="KW-0472">Membrane</keyword>
<keyword id="KW-1185">Reference proteome</keyword>
<keyword id="KW-0812">Transmembrane</keyword>
<keyword id="KW-1133">Transmembrane helix</keyword>
<keyword id="KW-0813">Transport</keyword>
<organism>
    <name type="scientific">Glaesserella parasuis serovar 5 (strain SH0165)</name>
    <name type="common">Haemophilus parasuis</name>
    <dbReference type="NCBI Taxonomy" id="557723"/>
    <lineage>
        <taxon>Bacteria</taxon>
        <taxon>Pseudomonadati</taxon>
        <taxon>Pseudomonadota</taxon>
        <taxon>Gammaproteobacteria</taxon>
        <taxon>Pasteurellales</taxon>
        <taxon>Pasteurellaceae</taxon>
        <taxon>Glaesserella</taxon>
    </lineage>
</organism>
<reference key="1">
    <citation type="journal article" date="2009" name="J. Bacteriol.">
        <title>Complete genome sequence of Haemophilus parasuis SH0165.</title>
        <authorList>
            <person name="Yue M."/>
            <person name="Yang F."/>
            <person name="Yang J."/>
            <person name="Bei W."/>
            <person name="Cai X."/>
            <person name="Chen L."/>
            <person name="Dong J."/>
            <person name="Zhou R."/>
            <person name="Jin M."/>
            <person name="Jin Q."/>
            <person name="Chen H."/>
        </authorList>
    </citation>
    <scope>NUCLEOTIDE SEQUENCE [LARGE SCALE GENOMIC DNA]</scope>
    <source>
        <strain>SH0165</strain>
    </source>
</reference>
<gene>
    <name evidence="1" type="primary">atpB</name>
    <name type="ordered locus">HAPS_1620</name>
</gene>